<name>LEPA_BURCM</name>
<keyword id="KW-0997">Cell inner membrane</keyword>
<keyword id="KW-1003">Cell membrane</keyword>
<keyword id="KW-0342">GTP-binding</keyword>
<keyword id="KW-0378">Hydrolase</keyword>
<keyword id="KW-0472">Membrane</keyword>
<keyword id="KW-0547">Nucleotide-binding</keyword>
<keyword id="KW-0648">Protein biosynthesis</keyword>
<proteinExistence type="inferred from homology"/>
<sequence length="597" mass="65967">MDHIRNFSIIAHIDHGKSTLADRIIQVCGGLADREMEAQVLDSMDIERERGITIKAQTAALSYRARDGKVYNLNLIDTPGHVDFSYEVSRSLSACEGALLVVDASQGVEAQTVANCYTAIELGVEVVPVLNKIDLPAANPENAIEEIEDVIGIDATDATRCSAKTGLGVEDVLESLIAKVPPPKGDPAAPLQALIIDSWFDNYVGVVMLVRIVNGTLRPKEKIKMMATGAQYPVEHVGVFTPKSRNLESLSAGQVGFIIAGIKELTAAKVGDTVTHVAKAASEPLPGFKEVKPQVFAGLYPVEANQYDALRESLEKLKLNDASLQYEPEVSQALGFGFRCGFLGLLHMEIVQERLEREFDMDLITTAPTVVYEVVQSDGSTIMVENPAKMPEPGRIAEVREPIVTVNLYMPQDYVGSVITLCEQKRGSQINMQYHGRQVQLTYEIPMAEIVLDFFDRLKSVSRGYASMDYEFKEYRSSDVVKVDMLINGDKVDALSIIVHRSQSQYRGREVAAKMREIIPRQMYDVAIQAAIGAHIVARENIKALRKNVLAKCYGGDITRKKKLLEKQKEGKKRMKQVGSVEIPQEAFLAILRVEDK</sequence>
<feature type="chain" id="PRO_1000031973" description="Elongation factor 4">
    <location>
        <begin position="1"/>
        <end position="597"/>
    </location>
</feature>
<feature type="domain" description="tr-type G">
    <location>
        <begin position="2"/>
        <end position="184"/>
    </location>
</feature>
<feature type="binding site" evidence="1">
    <location>
        <begin position="14"/>
        <end position="19"/>
    </location>
    <ligand>
        <name>GTP</name>
        <dbReference type="ChEBI" id="CHEBI:37565"/>
    </ligand>
</feature>
<feature type="binding site" evidence="1">
    <location>
        <begin position="131"/>
        <end position="134"/>
    </location>
    <ligand>
        <name>GTP</name>
        <dbReference type="ChEBI" id="CHEBI:37565"/>
    </ligand>
</feature>
<reference key="1">
    <citation type="submission" date="2006-08" db="EMBL/GenBank/DDBJ databases">
        <title>Complete sequence of chromosome 1 of Burkholderia cepacia AMMD.</title>
        <authorList>
            <person name="Copeland A."/>
            <person name="Lucas S."/>
            <person name="Lapidus A."/>
            <person name="Barry K."/>
            <person name="Detter J.C."/>
            <person name="Glavina del Rio T."/>
            <person name="Hammon N."/>
            <person name="Israni S."/>
            <person name="Pitluck S."/>
            <person name="Bruce D."/>
            <person name="Chain P."/>
            <person name="Malfatti S."/>
            <person name="Shin M."/>
            <person name="Vergez L."/>
            <person name="Schmutz J."/>
            <person name="Larimer F."/>
            <person name="Land M."/>
            <person name="Hauser L."/>
            <person name="Kyrpides N."/>
            <person name="Kim E."/>
            <person name="Parke J."/>
            <person name="Coenye T."/>
            <person name="Konstantinidis K."/>
            <person name="Ramette A."/>
            <person name="Tiedje J."/>
            <person name="Richardson P."/>
        </authorList>
    </citation>
    <scope>NUCLEOTIDE SEQUENCE [LARGE SCALE GENOMIC DNA]</scope>
    <source>
        <strain>ATCC BAA-244 / DSM 16087 / CCUG 44356 / LMG 19182 / AMMD</strain>
    </source>
</reference>
<dbReference type="EC" id="3.6.5.n1" evidence="1"/>
<dbReference type="EMBL" id="CP000440">
    <property type="protein sequence ID" value="ABI86567.1"/>
    <property type="molecule type" value="Genomic_DNA"/>
</dbReference>
<dbReference type="RefSeq" id="WP_006759775.1">
    <property type="nucleotide sequence ID" value="NZ_CP009798.1"/>
</dbReference>
<dbReference type="SMR" id="Q0BH06"/>
<dbReference type="GeneID" id="93083583"/>
<dbReference type="KEGG" id="bam:Bamb_1008"/>
<dbReference type="PATRIC" id="fig|339670.21.peg.564"/>
<dbReference type="eggNOG" id="COG0481">
    <property type="taxonomic scope" value="Bacteria"/>
</dbReference>
<dbReference type="Proteomes" id="UP000000662">
    <property type="component" value="Chromosome 1"/>
</dbReference>
<dbReference type="GO" id="GO:0005886">
    <property type="term" value="C:plasma membrane"/>
    <property type="evidence" value="ECO:0007669"/>
    <property type="project" value="UniProtKB-SubCell"/>
</dbReference>
<dbReference type="GO" id="GO:0005525">
    <property type="term" value="F:GTP binding"/>
    <property type="evidence" value="ECO:0007669"/>
    <property type="project" value="UniProtKB-UniRule"/>
</dbReference>
<dbReference type="GO" id="GO:0003924">
    <property type="term" value="F:GTPase activity"/>
    <property type="evidence" value="ECO:0007669"/>
    <property type="project" value="UniProtKB-UniRule"/>
</dbReference>
<dbReference type="GO" id="GO:0097216">
    <property type="term" value="F:guanosine tetraphosphate binding"/>
    <property type="evidence" value="ECO:0007669"/>
    <property type="project" value="UniProtKB-ARBA"/>
</dbReference>
<dbReference type="GO" id="GO:0043022">
    <property type="term" value="F:ribosome binding"/>
    <property type="evidence" value="ECO:0007669"/>
    <property type="project" value="UniProtKB-UniRule"/>
</dbReference>
<dbReference type="GO" id="GO:0003746">
    <property type="term" value="F:translation elongation factor activity"/>
    <property type="evidence" value="ECO:0007669"/>
    <property type="project" value="UniProtKB-UniRule"/>
</dbReference>
<dbReference type="GO" id="GO:0045727">
    <property type="term" value="P:positive regulation of translation"/>
    <property type="evidence" value="ECO:0007669"/>
    <property type="project" value="UniProtKB-UniRule"/>
</dbReference>
<dbReference type="CDD" id="cd03699">
    <property type="entry name" value="EF4_II"/>
    <property type="match status" value="1"/>
</dbReference>
<dbReference type="CDD" id="cd16260">
    <property type="entry name" value="EF4_III"/>
    <property type="match status" value="1"/>
</dbReference>
<dbReference type="CDD" id="cd01890">
    <property type="entry name" value="LepA"/>
    <property type="match status" value="1"/>
</dbReference>
<dbReference type="CDD" id="cd03709">
    <property type="entry name" value="lepA_C"/>
    <property type="match status" value="1"/>
</dbReference>
<dbReference type="FunFam" id="3.40.50.300:FF:000078">
    <property type="entry name" value="Elongation factor 4"/>
    <property type="match status" value="1"/>
</dbReference>
<dbReference type="FunFam" id="2.40.30.10:FF:000015">
    <property type="entry name" value="Translation factor GUF1, mitochondrial"/>
    <property type="match status" value="1"/>
</dbReference>
<dbReference type="FunFam" id="3.30.70.240:FF:000007">
    <property type="entry name" value="Translation factor GUF1, mitochondrial"/>
    <property type="match status" value="1"/>
</dbReference>
<dbReference type="FunFam" id="3.30.70.2570:FF:000001">
    <property type="entry name" value="Translation factor GUF1, mitochondrial"/>
    <property type="match status" value="1"/>
</dbReference>
<dbReference type="FunFam" id="3.30.70.870:FF:000004">
    <property type="entry name" value="Translation factor GUF1, mitochondrial"/>
    <property type="match status" value="1"/>
</dbReference>
<dbReference type="Gene3D" id="3.30.70.240">
    <property type="match status" value="1"/>
</dbReference>
<dbReference type="Gene3D" id="3.30.70.2570">
    <property type="entry name" value="Elongation factor 4, C-terminal domain"/>
    <property type="match status" value="1"/>
</dbReference>
<dbReference type="Gene3D" id="3.30.70.870">
    <property type="entry name" value="Elongation Factor G (Translational Gtpase), domain 3"/>
    <property type="match status" value="1"/>
</dbReference>
<dbReference type="Gene3D" id="3.40.50.300">
    <property type="entry name" value="P-loop containing nucleotide triphosphate hydrolases"/>
    <property type="match status" value="1"/>
</dbReference>
<dbReference type="Gene3D" id="2.40.30.10">
    <property type="entry name" value="Translation factors"/>
    <property type="match status" value="1"/>
</dbReference>
<dbReference type="HAMAP" id="MF_00071">
    <property type="entry name" value="LepA"/>
    <property type="match status" value="1"/>
</dbReference>
<dbReference type="InterPro" id="IPR006297">
    <property type="entry name" value="EF-4"/>
</dbReference>
<dbReference type="InterPro" id="IPR035647">
    <property type="entry name" value="EFG_III/V"/>
</dbReference>
<dbReference type="InterPro" id="IPR000640">
    <property type="entry name" value="EFG_V-like"/>
</dbReference>
<dbReference type="InterPro" id="IPR004161">
    <property type="entry name" value="EFTu-like_2"/>
</dbReference>
<dbReference type="InterPro" id="IPR031157">
    <property type="entry name" value="G_TR_CS"/>
</dbReference>
<dbReference type="InterPro" id="IPR038363">
    <property type="entry name" value="LepA_C_sf"/>
</dbReference>
<dbReference type="InterPro" id="IPR013842">
    <property type="entry name" value="LepA_CTD"/>
</dbReference>
<dbReference type="InterPro" id="IPR035654">
    <property type="entry name" value="LepA_IV"/>
</dbReference>
<dbReference type="InterPro" id="IPR027417">
    <property type="entry name" value="P-loop_NTPase"/>
</dbReference>
<dbReference type="InterPro" id="IPR005225">
    <property type="entry name" value="Small_GTP-bd"/>
</dbReference>
<dbReference type="InterPro" id="IPR000795">
    <property type="entry name" value="T_Tr_GTP-bd_dom"/>
</dbReference>
<dbReference type="InterPro" id="IPR009000">
    <property type="entry name" value="Transl_B-barrel_sf"/>
</dbReference>
<dbReference type="NCBIfam" id="TIGR01393">
    <property type="entry name" value="lepA"/>
    <property type="match status" value="1"/>
</dbReference>
<dbReference type="NCBIfam" id="TIGR00231">
    <property type="entry name" value="small_GTP"/>
    <property type="match status" value="1"/>
</dbReference>
<dbReference type="PANTHER" id="PTHR43512:SF4">
    <property type="entry name" value="TRANSLATION FACTOR GUF1 HOMOLOG, CHLOROPLASTIC"/>
    <property type="match status" value="1"/>
</dbReference>
<dbReference type="PANTHER" id="PTHR43512">
    <property type="entry name" value="TRANSLATION FACTOR GUF1-RELATED"/>
    <property type="match status" value="1"/>
</dbReference>
<dbReference type="Pfam" id="PF00679">
    <property type="entry name" value="EFG_C"/>
    <property type="match status" value="1"/>
</dbReference>
<dbReference type="Pfam" id="PF00009">
    <property type="entry name" value="GTP_EFTU"/>
    <property type="match status" value="1"/>
</dbReference>
<dbReference type="Pfam" id="PF03144">
    <property type="entry name" value="GTP_EFTU_D2"/>
    <property type="match status" value="1"/>
</dbReference>
<dbReference type="Pfam" id="PF06421">
    <property type="entry name" value="LepA_C"/>
    <property type="match status" value="1"/>
</dbReference>
<dbReference type="PRINTS" id="PR00315">
    <property type="entry name" value="ELONGATNFCT"/>
</dbReference>
<dbReference type="SMART" id="SM00838">
    <property type="entry name" value="EFG_C"/>
    <property type="match status" value="1"/>
</dbReference>
<dbReference type="SUPFAM" id="SSF54980">
    <property type="entry name" value="EF-G C-terminal domain-like"/>
    <property type="match status" value="2"/>
</dbReference>
<dbReference type="SUPFAM" id="SSF52540">
    <property type="entry name" value="P-loop containing nucleoside triphosphate hydrolases"/>
    <property type="match status" value="1"/>
</dbReference>
<dbReference type="SUPFAM" id="SSF50447">
    <property type="entry name" value="Translation proteins"/>
    <property type="match status" value="1"/>
</dbReference>
<dbReference type="PROSITE" id="PS00301">
    <property type="entry name" value="G_TR_1"/>
    <property type="match status" value="1"/>
</dbReference>
<dbReference type="PROSITE" id="PS51722">
    <property type="entry name" value="G_TR_2"/>
    <property type="match status" value="1"/>
</dbReference>
<evidence type="ECO:0000255" key="1">
    <source>
        <dbReference type="HAMAP-Rule" id="MF_00071"/>
    </source>
</evidence>
<organism>
    <name type="scientific">Burkholderia ambifaria (strain ATCC BAA-244 / DSM 16087 / CCUG 44356 / LMG 19182 / AMMD)</name>
    <name type="common">Burkholderia cepacia (strain AMMD)</name>
    <dbReference type="NCBI Taxonomy" id="339670"/>
    <lineage>
        <taxon>Bacteria</taxon>
        <taxon>Pseudomonadati</taxon>
        <taxon>Pseudomonadota</taxon>
        <taxon>Betaproteobacteria</taxon>
        <taxon>Burkholderiales</taxon>
        <taxon>Burkholderiaceae</taxon>
        <taxon>Burkholderia</taxon>
        <taxon>Burkholderia cepacia complex</taxon>
    </lineage>
</organism>
<accession>Q0BH06</accession>
<gene>
    <name evidence="1" type="primary">lepA</name>
    <name type="ordered locus">Bamb_1008</name>
</gene>
<comment type="function">
    <text evidence="1">Required for accurate and efficient protein synthesis under certain stress conditions. May act as a fidelity factor of the translation reaction, by catalyzing a one-codon backward translocation of tRNAs on improperly translocated ribosomes. Back-translocation proceeds from a post-translocation (POST) complex to a pre-translocation (PRE) complex, thus giving elongation factor G a second chance to translocate the tRNAs correctly. Binds to ribosomes in a GTP-dependent manner.</text>
</comment>
<comment type="catalytic activity">
    <reaction evidence="1">
        <text>GTP + H2O = GDP + phosphate + H(+)</text>
        <dbReference type="Rhea" id="RHEA:19669"/>
        <dbReference type="ChEBI" id="CHEBI:15377"/>
        <dbReference type="ChEBI" id="CHEBI:15378"/>
        <dbReference type="ChEBI" id="CHEBI:37565"/>
        <dbReference type="ChEBI" id="CHEBI:43474"/>
        <dbReference type="ChEBI" id="CHEBI:58189"/>
        <dbReference type="EC" id="3.6.5.n1"/>
    </reaction>
</comment>
<comment type="subcellular location">
    <subcellularLocation>
        <location evidence="1">Cell inner membrane</location>
        <topology evidence="1">Peripheral membrane protein</topology>
        <orientation evidence="1">Cytoplasmic side</orientation>
    </subcellularLocation>
</comment>
<comment type="similarity">
    <text evidence="1">Belongs to the TRAFAC class translation factor GTPase superfamily. Classic translation factor GTPase family. LepA subfamily.</text>
</comment>
<protein>
    <recommendedName>
        <fullName evidence="1">Elongation factor 4</fullName>
        <shortName evidence="1">EF-4</shortName>
        <ecNumber evidence="1">3.6.5.n1</ecNumber>
    </recommendedName>
    <alternativeName>
        <fullName evidence="1">Ribosomal back-translocase LepA</fullName>
    </alternativeName>
</protein>